<gene>
    <name type="primary">tub</name>
    <name type="synonym">tube</name>
</gene>
<protein>
    <recommendedName>
        <fullName>Protein Tube</fullName>
    </recommendedName>
</protein>
<reference key="1">
    <citation type="journal article" date="1993" name="EMBO J.">
        <title>Domain mapping of tube, a protein essential for dorsoventral patterning of the Drosophila embryo.</title>
        <authorList>
            <person name="Letsou A."/>
            <person name="Alexander S."/>
            <person name="Wasserman S.A."/>
        </authorList>
    </citation>
    <scope>NUCLEOTIDE SEQUENCE [GENOMIC DNA]</scope>
</reference>
<evidence type="ECO:0000256" key="1">
    <source>
        <dbReference type="SAM" id="MobiDB-lite"/>
    </source>
</evidence>
<keyword id="KW-0963">Cytoplasm</keyword>
<keyword id="KW-0217">Developmental protein</keyword>
<keyword id="KW-0677">Repeat</keyword>
<keyword id="KW-0807">Transducer</keyword>
<organism>
    <name type="scientific">Drosophila virilis</name>
    <name type="common">Fruit fly</name>
    <dbReference type="NCBI Taxonomy" id="7244"/>
    <lineage>
        <taxon>Eukaryota</taxon>
        <taxon>Metazoa</taxon>
        <taxon>Ecdysozoa</taxon>
        <taxon>Arthropoda</taxon>
        <taxon>Hexapoda</taxon>
        <taxon>Insecta</taxon>
        <taxon>Pterygota</taxon>
        <taxon>Neoptera</taxon>
        <taxon>Endopterygota</taxon>
        <taxon>Diptera</taxon>
        <taxon>Brachycera</taxon>
        <taxon>Muscomorpha</taxon>
        <taxon>Ephydroidea</taxon>
        <taxon>Drosophilidae</taxon>
        <taxon>Drosophila</taxon>
    </lineage>
</organism>
<accession>Q08171</accession>
<name>TUBE_DROVI</name>
<comment type="function">
    <text>Required for the determination of embryonic dorsoventral polarity. Is involved in transduction of information regulating nuclear import of dorsal protein.</text>
</comment>
<comment type="subcellular location">
    <subcellularLocation>
        <location>Cytoplasm</location>
    </subcellularLocation>
</comment>
<comment type="tissue specificity">
    <text>Maternal and zygotic gene product.</text>
</comment>
<comment type="developmental stage">
    <text>Expressed maximally early in embryogenesis, and in late larval development.</text>
</comment>
<feature type="chain" id="PRO_0000065695" description="Protein Tube">
    <location>
        <begin position="1"/>
        <end position="514"/>
    </location>
</feature>
<feature type="region of interest" description="Disordered" evidence="1">
    <location>
        <begin position="226"/>
        <end position="250"/>
    </location>
</feature>
<feature type="region of interest" description="Disordered" evidence="1">
    <location>
        <begin position="255"/>
        <end position="274"/>
    </location>
</feature>
<feature type="region of interest" description="Disordered" evidence="1">
    <location>
        <begin position="324"/>
        <end position="343"/>
    </location>
</feature>
<feature type="region of interest" description="Disordered" evidence="1">
    <location>
        <begin position="366"/>
        <end position="385"/>
    </location>
</feature>
<feature type="region of interest" description="Disordered" evidence="1">
    <location>
        <begin position="413"/>
        <end position="514"/>
    </location>
</feature>
<feature type="compositionally biased region" description="Low complexity" evidence="1">
    <location>
        <begin position="259"/>
        <end position="274"/>
    </location>
</feature>
<feature type="compositionally biased region" description="Polar residues" evidence="1">
    <location>
        <begin position="422"/>
        <end position="433"/>
    </location>
</feature>
<feature type="compositionally biased region" description="Acidic residues" evidence="1">
    <location>
        <begin position="434"/>
        <end position="460"/>
    </location>
</feature>
<feature type="compositionally biased region" description="Polar residues" evidence="1">
    <location>
        <begin position="477"/>
        <end position="514"/>
    </location>
</feature>
<sequence>MEMAKANGWAVVCTSTNTNTVPIYSKYTRCTELRRVDDNDIYKLATILDVNGCWRKLMSIIPKRLDAQACSAPGALNYQEIAAKVGLKYTAQQISLIDGTAERLTPGQSISQVMIDEWKTSGKLNERPTVGVLLQLLVHAEIYSAADFVALHFLNEPKPERPTDGPAAHISLDLCSEDLSEDMDVEDGASYQPNTSALNAAVEQARGTGMNLDYFDKHMVRRDKSVPQQLENGTSSTVPVPPPRAARSSRLLKATASNVAPTTASNAPSASNTANVPNLSILNASSKKLAASSEQTLQPQNIPNLSILNGSSEAVLMATTSTTLDAGKSDNASNGRSSASTSTATIPNVPLITLLIENSSCEISDASDATQITSKSTATKTVPDMSTASYNNLPAISALNLNIASGAGELDGNGAKARGDNADNNSSGTNSLSNDDDEQKEDDDDDDDDDVVDVDDEEADVSLPNLSNSDHNDSSLTTVTCTSGENSFEFTNDSSSASNDDYTNNIPNLSELQQ</sequence>
<proteinExistence type="evidence at transcript level"/>
<dbReference type="EMBL" id="L20449">
    <property type="protein sequence ID" value="AAA28995.1"/>
    <property type="molecule type" value="Genomic_DNA"/>
</dbReference>
<dbReference type="SMR" id="Q08171"/>
<dbReference type="eggNOG" id="ENOG502S7SQ">
    <property type="taxonomic scope" value="Eukaryota"/>
</dbReference>
<dbReference type="OrthoDB" id="4062651at2759"/>
<dbReference type="GO" id="GO:0005737">
    <property type="term" value="C:cytoplasm"/>
    <property type="evidence" value="ECO:0007669"/>
    <property type="project" value="UniProtKB-SubCell"/>
</dbReference>
<dbReference type="GO" id="GO:0007165">
    <property type="term" value="P:signal transduction"/>
    <property type="evidence" value="ECO:0007669"/>
    <property type="project" value="UniProtKB-KW"/>
</dbReference>
<dbReference type="Gene3D" id="1.10.533.10">
    <property type="entry name" value="Death Domain, Fas"/>
    <property type="match status" value="1"/>
</dbReference>
<dbReference type="InterPro" id="IPR011029">
    <property type="entry name" value="DEATH-like_dom_sf"/>
</dbReference>
<dbReference type="InterPro" id="IPR000488">
    <property type="entry name" value="Death_dom"/>
</dbReference>
<dbReference type="InterPro" id="IPR029397">
    <property type="entry name" value="Tube_Death"/>
</dbReference>
<dbReference type="Pfam" id="PF14786">
    <property type="entry name" value="Death_2"/>
    <property type="match status" value="1"/>
</dbReference>
<dbReference type="SMART" id="SM00005">
    <property type="entry name" value="DEATH"/>
    <property type="match status" value="1"/>
</dbReference>
<dbReference type="SUPFAM" id="SSF47986">
    <property type="entry name" value="DEATH domain"/>
    <property type="match status" value="1"/>
</dbReference>